<reference key="1">
    <citation type="journal article" date="2004" name="Nature">
        <title>Genome evolution in yeasts.</title>
        <authorList>
            <person name="Dujon B."/>
            <person name="Sherman D."/>
            <person name="Fischer G."/>
            <person name="Durrens P."/>
            <person name="Casaregola S."/>
            <person name="Lafontaine I."/>
            <person name="de Montigny J."/>
            <person name="Marck C."/>
            <person name="Neuveglise C."/>
            <person name="Talla E."/>
            <person name="Goffard N."/>
            <person name="Frangeul L."/>
            <person name="Aigle M."/>
            <person name="Anthouard V."/>
            <person name="Babour A."/>
            <person name="Barbe V."/>
            <person name="Barnay S."/>
            <person name="Blanchin S."/>
            <person name="Beckerich J.-M."/>
            <person name="Beyne E."/>
            <person name="Bleykasten C."/>
            <person name="Boisrame A."/>
            <person name="Boyer J."/>
            <person name="Cattolico L."/>
            <person name="Confanioleri F."/>
            <person name="de Daruvar A."/>
            <person name="Despons L."/>
            <person name="Fabre E."/>
            <person name="Fairhead C."/>
            <person name="Ferry-Dumazet H."/>
            <person name="Groppi A."/>
            <person name="Hantraye F."/>
            <person name="Hennequin C."/>
            <person name="Jauniaux N."/>
            <person name="Joyet P."/>
            <person name="Kachouri R."/>
            <person name="Kerrest A."/>
            <person name="Koszul R."/>
            <person name="Lemaire M."/>
            <person name="Lesur I."/>
            <person name="Ma L."/>
            <person name="Muller H."/>
            <person name="Nicaud J.-M."/>
            <person name="Nikolski M."/>
            <person name="Oztas S."/>
            <person name="Ozier-Kalogeropoulos O."/>
            <person name="Pellenz S."/>
            <person name="Potier S."/>
            <person name="Richard G.-F."/>
            <person name="Straub M.-L."/>
            <person name="Suleau A."/>
            <person name="Swennen D."/>
            <person name="Tekaia F."/>
            <person name="Wesolowski-Louvel M."/>
            <person name="Westhof E."/>
            <person name="Wirth B."/>
            <person name="Zeniou-Meyer M."/>
            <person name="Zivanovic Y."/>
            <person name="Bolotin-Fukuhara M."/>
            <person name="Thierry A."/>
            <person name="Bouchier C."/>
            <person name="Caudron B."/>
            <person name="Scarpelli C."/>
            <person name="Gaillardin C."/>
            <person name="Weissenbach J."/>
            <person name="Wincker P."/>
            <person name="Souciet J.-L."/>
        </authorList>
    </citation>
    <scope>NUCLEOTIDE SEQUENCE [LARGE SCALE GENOMIC DNA]</scope>
    <source>
        <strain>ATCC 36239 / CBS 767 / BCRC 21394 / JCM 1990 / NBRC 0083 / IGC 2968</strain>
    </source>
</reference>
<evidence type="ECO:0000250" key="1"/>
<evidence type="ECO:0000305" key="2"/>
<organism>
    <name type="scientific">Debaryomyces hansenii (strain ATCC 36239 / CBS 767 / BCRC 21394 / JCM 1990 / NBRC 0083 / IGC 2968)</name>
    <name type="common">Yeast</name>
    <name type="synonym">Torulaspora hansenii</name>
    <dbReference type="NCBI Taxonomy" id="284592"/>
    <lineage>
        <taxon>Eukaryota</taxon>
        <taxon>Fungi</taxon>
        <taxon>Dikarya</taxon>
        <taxon>Ascomycota</taxon>
        <taxon>Saccharomycotina</taxon>
        <taxon>Pichiomycetes</taxon>
        <taxon>Debaryomycetaceae</taxon>
        <taxon>Debaryomyces</taxon>
    </lineage>
</organism>
<dbReference type="EMBL" id="CR382137">
    <property type="protein sequence ID" value="CAG88225.1"/>
    <property type="molecule type" value="Genomic_DNA"/>
</dbReference>
<dbReference type="RefSeq" id="XP_459976.1">
    <property type="nucleotide sequence ID" value="XM_459976.1"/>
</dbReference>
<dbReference type="SMR" id="Q6BP94"/>
<dbReference type="FunCoup" id="Q6BP94">
    <property type="interactions" value="514"/>
</dbReference>
<dbReference type="STRING" id="284592.Q6BP94"/>
<dbReference type="GeneID" id="2901863"/>
<dbReference type="KEGG" id="dha:DEHA2E15422g"/>
<dbReference type="VEuPathDB" id="FungiDB:DEHA2E15422g"/>
<dbReference type="eggNOG" id="KOG4066">
    <property type="taxonomic scope" value="Eukaryota"/>
</dbReference>
<dbReference type="HOGENOM" id="CLU_065847_1_1_1"/>
<dbReference type="InParanoid" id="Q6BP94"/>
<dbReference type="OMA" id="DANPHFD"/>
<dbReference type="OrthoDB" id="329139at2759"/>
<dbReference type="Proteomes" id="UP000000599">
    <property type="component" value="Chromosome E"/>
</dbReference>
<dbReference type="GO" id="GO:0000781">
    <property type="term" value="C:chromosome, telomeric region"/>
    <property type="evidence" value="ECO:0007669"/>
    <property type="project" value="UniProtKB-SubCell"/>
</dbReference>
<dbReference type="GO" id="GO:0005829">
    <property type="term" value="C:cytosol"/>
    <property type="evidence" value="ECO:0007669"/>
    <property type="project" value="TreeGrafter"/>
</dbReference>
<dbReference type="GO" id="GO:0000408">
    <property type="term" value="C:EKC/KEOPS complex"/>
    <property type="evidence" value="ECO:0007669"/>
    <property type="project" value="TreeGrafter"/>
</dbReference>
<dbReference type="GO" id="GO:0005634">
    <property type="term" value="C:nucleus"/>
    <property type="evidence" value="ECO:0007669"/>
    <property type="project" value="UniProtKB-SubCell"/>
</dbReference>
<dbReference type="GO" id="GO:0002949">
    <property type="term" value="P:tRNA threonylcarbamoyladenosine modification"/>
    <property type="evidence" value="ECO:0007669"/>
    <property type="project" value="TreeGrafter"/>
</dbReference>
<dbReference type="Gene3D" id="3.30.2380.10">
    <property type="entry name" value="CGI121/TPRKB"/>
    <property type="match status" value="1"/>
</dbReference>
<dbReference type="InterPro" id="IPR013926">
    <property type="entry name" value="CGI121/TPRKB"/>
</dbReference>
<dbReference type="InterPro" id="IPR036504">
    <property type="entry name" value="CGI121/TPRKB_sf"/>
</dbReference>
<dbReference type="PANTHER" id="PTHR15840">
    <property type="entry name" value="CGI-121 FAMILY MEMBER"/>
    <property type="match status" value="1"/>
</dbReference>
<dbReference type="PANTHER" id="PTHR15840:SF10">
    <property type="entry name" value="EKC_KEOPS COMPLEX SUBUNIT TPRKB"/>
    <property type="match status" value="1"/>
</dbReference>
<dbReference type="Pfam" id="PF08617">
    <property type="entry name" value="CGI-121"/>
    <property type="match status" value="1"/>
</dbReference>
<dbReference type="SUPFAM" id="SSF143870">
    <property type="entry name" value="PF0523-like"/>
    <property type="match status" value="1"/>
</dbReference>
<comment type="function">
    <text evidence="1">Component of the EKC/KEOPS complex that is required for the formation of a threonylcarbamoyl group on adenosine at position 37 (t(6)A37) in tRNAs that read codons beginning with adenine. The complex is probably involved in the transfer of the threonylcarbamoyl moiety of threonylcarbamoyl-AMP (TC-AMP) to the N6 group of A37. CGI121 acts as an allosteric effector that regulates the t(6)A activity of the complex. The EKC/KEOPS complex also promotes both telomere uncapping and telomere elongation. The complex is required for efficient recruitment of transcriptional coactivators. CGI121 is not required for tRNA modification (By similarity).</text>
</comment>
<comment type="subunit">
    <text evidence="1">Component of the EKC/KEOPS complex composed of at least BUD32, CGI121, GON7, KAE1 and PCC1; the whole complex dimerizes.</text>
</comment>
<comment type="subcellular location">
    <subcellularLocation>
        <location evidence="1">Nucleus</location>
    </subcellularLocation>
    <subcellularLocation>
        <location evidence="1">Chromosome</location>
        <location evidence="1">Telomere</location>
    </subcellularLocation>
</comment>
<comment type="similarity">
    <text evidence="2">Belongs to the CGI121/TPRKB family.</text>
</comment>
<gene>
    <name type="primary">CGI121</name>
    <name type="ordered locus">DEHA2E15422g</name>
</gene>
<feature type="chain" id="PRO_0000279212" description="EKC/KEOPS complex subunit CGI121">
    <location>
        <begin position="1"/>
        <end position="197"/>
    </location>
</feature>
<keyword id="KW-0010">Activator</keyword>
<keyword id="KW-0158">Chromosome</keyword>
<keyword id="KW-0539">Nucleus</keyword>
<keyword id="KW-1185">Reference proteome</keyword>
<keyword id="KW-0779">Telomere</keyword>
<keyword id="KW-0804">Transcription</keyword>
<keyword id="KW-0805">Transcription regulation</keyword>
<keyword id="KW-0819">tRNA processing</keyword>
<sequence length="197" mass="22396">MVYEELKLAQFPNCTVLIFLFTGVDTPVLKQVKEQLISGNKDYDFCFLNPQHIISLEHLYSSIHKAVLNHEFGNMRAKTLNTEIIFNLSPINNIMDALKRFGVDEACPNLITIKVLPTSECNEIAFKDLNDHLLKILSTNDSHNPRLNNEIIFDSLVDLKKLKKVYKLNDAKFSKDESDLQGELTRLAIGACQLRGC</sequence>
<proteinExistence type="inferred from homology"/>
<protein>
    <recommendedName>
        <fullName>EKC/KEOPS complex subunit CGI121</fullName>
    </recommendedName>
</protein>
<name>CG121_DEBHA</name>
<accession>Q6BP94</accession>